<dbReference type="EC" id="6.3.3.1" evidence="1"/>
<dbReference type="EMBL" id="CP000653">
    <property type="protein sequence ID" value="ABP61652.1"/>
    <property type="molecule type" value="Genomic_DNA"/>
</dbReference>
<dbReference type="RefSeq" id="WP_015959984.1">
    <property type="nucleotide sequence ID" value="NC_009436.1"/>
</dbReference>
<dbReference type="SMR" id="A4WD72"/>
<dbReference type="STRING" id="399742.Ent638_2988"/>
<dbReference type="KEGG" id="ent:Ent638_2988"/>
<dbReference type="eggNOG" id="COG0150">
    <property type="taxonomic scope" value="Bacteria"/>
</dbReference>
<dbReference type="HOGENOM" id="CLU_047116_0_0_6"/>
<dbReference type="OrthoDB" id="9777881at2"/>
<dbReference type="UniPathway" id="UPA00074">
    <property type="reaction ID" value="UER00129"/>
</dbReference>
<dbReference type="Proteomes" id="UP000000230">
    <property type="component" value="Chromosome"/>
</dbReference>
<dbReference type="GO" id="GO:0005829">
    <property type="term" value="C:cytosol"/>
    <property type="evidence" value="ECO:0007669"/>
    <property type="project" value="TreeGrafter"/>
</dbReference>
<dbReference type="GO" id="GO:0005524">
    <property type="term" value="F:ATP binding"/>
    <property type="evidence" value="ECO:0007669"/>
    <property type="project" value="UniProtKB-KW"/>
</dbReference>
<dbReference type="GO" id="GO:0004637">
    <property type="term" value="F:phosphoribosylamine-glycine ligase activity"/>
    <property type="evidence" value="ECO:0007669"/>
    <property type="project" value="TreeGrafter"/>
</dbReference>
<dbReference type="GO" id="GO:0004641">
    <property type="term" value="F:phosphoribosylformylglycinamidine cyclo-ligase activity"/>
    <property type="evidence" value="ECO:0007669"/>
    <property type="project" value="UniProtKB-UniRule"/>
</dbReference>
<dbReference type="GO" id="GO:0006189">
    <property type="term" value="P:'de novo' IMP biosynthetic process"/>
    <property type="evidence" value="ECO:0007669"/>
    <property type="project" value="UniProtKB-UniRule"/>
</dbReference>
<dbReference type="GO" id="GO:0046084">
    <property type="term" value="P:adenine biosynthetic process"/>
    <property type="evidence" value="ECO:0007669"/>
    <property type="project" value="TreeGrafter"/>
</dbReference>
<dbReference type="CDD" id="cd02196">
    <property type="entry name" value="PurM"/>
    <property type="match status" value="1"/>
</dbReference>
<dbReference type="FunFam" id="3.30.1330.10:FF:000001">
    <property type="entry name" value="Phosphoribosylformylglycinamidine cyclo-ligase"/>
    <property type="match status" value="1"/>
</dbReference>
<dbReference type="FunFam" id="3.90.650.10:FF:000001">
    <property type="entry name" value="Phosphoribosylformylglycinamidine cyclo-ligase"/>
    <property type="match status" value="1"/>
</dbReference>
<dbReference type="Gene3D" id="3.90.650.10">
    <property type="entry name" value="PurM-like C-terminal domain"/>
    <property type="match status" value="1"/>
</dbReference>
<dbReference type="Gene3D" id="3.30.1330.10">
    <property type="entry name" value="PurM-like, N-terminal domain"/>
    <property type="match status" value="1"/>
</dbReference>
<dbReference type="HAMAP" id="MF_00741">
    <property type="entry name" value="AIRS"/>
    <property type="match status" value="1"/>
</dbReference>
<dbReference type="InterPro" id="IPR010918">
    <property type="entry name" value="PurM-like_C_dom"/>
</dbReference>
<dbReference type="InterPro" id="IPR036676">
    <property type="entry name" value="PurM-like_C_sf"/>
</dbReference>
<dbReference type="InterPro" id="IPR016188">
    <property type="entry name" value="PurM-like_N"/>
</dbReference>
<dbReference type="InterPro" id="IPR036921">
    <property type="entry name" value="PurM-like_N_sf"/>
</dbReference>
<dbReference type="InterPro" id="IPR004733">
    <property type="entry name" value="PurM_cligase"/>
</dbReference>
<dbReference type="NCBIfam" id="TIGR00878">
    <property type="entry name" value="purM"/>
    <property type="match status" value="1"/>
</dbReference>
<dbReference type="PANTHER" id="PTHR10520:SF12">
    <property type="entry name" value="TRIFUNCTIONAL PURINE BIOSYNTHETIC PROTEIN ADENOSINE-3"/>
    <property type="match status" value="1"/>
</dbReference>
<dbReference type="PANTHER" id="PTHR10520">
    <property type="entry name" value="TRIFUNCTIONAL PURINE BIOSYNTHETIC PROTEIN ADENOSINE-3-RELATED"/>
    <property type="match status" value="1"/>
</dbReference>
<dbReference type="Pfam" id="PF00586">
    <property type="entry name" value="AIRS"/>
    <property type="match status" value="1"/>
</dbReference>
<dbReference type="Pfam" id="PF02769">
    <property type="entry name" value="AIRS_C"/>
    <property type="match status" value="1"/>
</dbReference>
<dbReference type="SUPFAM" id="SSF56042">
    <property type="entry name" value="PurM C-terminal domain-like"/>
    <property type="match status" value="1"/>
</dbReference>
<dbReference type="SUPFAM" id="SSF55326">
    <property type="entry name" value="PurM N-terminal domain-like"/>
    <property type="match status" value="1"/>
</dbReference>
<comment type="catalytic activity">
    <reaction evidence="1">
        <text>2-formamido-N(1)-(5-O-phospho-beta-D-ribosyl)acetamidine + ATP = 5-amino-1-(5-phospho-beta-D-ribosyl)imidazole + ADP + phosphate + H(+)</text>
        <dbReference type="Rhea" id="RHEA:23032"/>
        <dbReference type="ChEBI" id="CHEBI:15378"/>
        <dbReference type="ChEBI" id="CHEBI:30616"/>
        <dbReference type="ChEBI" id="CHEBI:43474"/>
        <dbReference type="ChEBI" id="CHEBI:137981"/>
        <dbReference type="ChEBI" id="CHEBI:147287"/>
        <dbReference type="ChEBI" id="CHEBI:456216"/>
        <dbReference type="EC" id="6.3.3.1"/>
    </reaction>
</comment>
<comment type="pathway">
    <text evidence="1">Purine metabolism; IMP biosynthesis via de novo pathway; 5-amino-1-(5-phospho-D-ribosyl)imidazole from N(2)-formyl-N(1)-(5-phospho-D-ribosyl)glycinamide: step 2/2.</text>
</comment>
<comment type="subcellular location">
    <subcellularLocation>
        <location evidence="1">Cytoplasm</location>
    </subcellularLocation>
</comment>
<comment type="similarity">
    <text evidence="1">Belongs to the AIR synthase family.</text>
</comment>
<accession>A4WD72</accession>
<gene>
    <name evidence="1" type="primary">purM</name>
    <name type="ordered locus">Ent638_2988</name>
</gene>
<name>PUR5_ENT38</name>
<feature type="chain" id="PRO_1000062160" description="Phosphoribosylformylglycinamidine cyclo-ligase">
    <location>
        <begin position="1"/>
        <end position="345"/>
    </location>
</feature>
<protein>
    <recommendedName>
        <fullName evidence="1">Phosphoribosylformylglycinamidine cyclo-ligase</fullName>
        <ecNumber evidence="1">6.3.3.1</ecNumber>
    </recommendedName>
    <alternativeName>
        <fullName evidence="1">AIR synthase</fullName>
    </alternativeName>
    <alternativeName>
        <fullName evidence="1">AIRS</fullName>
    </alternativeName>
    <alternativeName>
        <fullName evidence="1">Phosphoribosyl-aminoimidazole synthetase</fullName>
    </alternativeName>
</protein>
<organism>
    <name type="scientific">Enterobacter sp. (strain 638)</name>
    <dbReference type="NCBI Taxonomy" id="399742"/>
    <lineage>
        <taxon>Bacteria</taxon>
        <taxon>Pseudomonadati</taxon>
        <taxon>Pseudomonadota</taxon>
        <taxon>Gammaproteobacteria</taxon>
        <taxon>Enterobacterales</taxon>
        <taxon>Enterobacteriaceae</taxon>
        <taxon>Enterobacter</taxon>
    </lineage>
</organism>
<sequence length="345" mass="36909">MTNKTSLSYKDAGVDIDAGNALVDRIKGVVKKTRRPEVMGGLGGFGALCALPQKYREPVLVSGTDGVGTKLRLAMDLKRHDTIGIDLVAMCVNDLVVQGAEPLFFLDYYATGKLDVDTAASVITGIAEGCLQSGCSLVGGETAEMPGMYHGEDYDVAGFCVGVVEKSEIIDGSKVTDGDVLIALGSSGPHSNGYSLVRKILEVSKTDPETTELEGKPLADHLLAPTRIYVKNILELIENVDVHAIAHLTGGGFWENIPRVLPDNTQAVIDESSWQWPAVFNWLQTAGNVSQHEMYRTFNCGVGMLIALPASEADKAIALMTAKGENAWKIGIIKASDSDERVVIE</sequence>
<reference key="1">
    <citation type="journal article" date="2010" name="PLoS Genet.">
        <title>Genome sequence of the plant growth promoting endophytic bacterium Enterobacter sp. 638.</title>
        <authorList>
            <person name="Taghavi S."/>
            <person name="van der Lelie D."/>
            <person name="Hoffman A."/>
            <person name="Zhang Y.B."/>
            <person name="Walla M.D."/>
            <person name="Vangronsveld J."/>
            <person name="Newman L."/>
            <person name="Monchy S."/>
        </authorList>
    </citation>
    <scope>NUCLEOTIDE SEQUENCE [LARGE SCALE GENOMIC DNA]</scope>
    <source>
        <strain>638</strain>
    </source>
</reference>
<evidence type="ECO:0000255" key="1">
    <source>
        <dbReference type="HAMAP-Rule" id="MF_00741"/>
    </source>
</evidence>
<proteinExistence type="inferred from homology"/>
<keyword id="KW-0067">ATP-binding</keyword>
<keyword id="KW-0963">Cytoplasm</keyword>
<keyword id="KW-0436">Ligase</keyword>
<keyword id="KW-0547">Nucleotide-binding</keyword>
<keyword id="KW-0658">Purine biosynthesis</keyword>